<evidence type="ECO:0000255" key="1">
    <source>
        <dbReference type="PROSITE-ProRule" id="PRU00162"/>
    </source>
</evidence>
<evidence type="ECO:0000255" key="2">
    <source>
        <dbReference type="PROSITE-ProRule" id="PRU00338"/>
    </source>
</evidence>
<evidence type="ECO:0000256" key="3">
    <source>
        <dbReference type="SAM" id="MobiDB-lite"/>
    </source>
</evidence>
<evidence type="ECO:0000269" key="4">
    <source>
    </source>
</evidence>
<evidence type="ECO:0000269" key="5">
    <source>
    </source>
</evidence>
<evidence type="ECO:0000269" key="6">
    <source>
    </source>
</evidence>
<evidence type="ECO:0000269" key="7">
    <source>
    </source>
</evidence>
<evidence type="ECO:0000269" key="8">
    <source>
    </source>
</evidence>
<evidence type="ECO:0000269" key="9">
    <source>
    </source>
</evidence>
<evidence type="ECO:0000303" key="10">
    <source>
    </source>
</evidence>
<evidence type="ECO:0000303" key="11">
    <source>
    </source>
</evidence>
<evidence type="ECO:0000305" key="12"/>
<evidence type="ECO:0000305" key="13">
    <source>
    </source>
</evidence>
<evidence type="ECO:0000305" key="14">
    <source>
    </source>
</evidence>
<gene>
    <name type="primary">MBD5</name>
    <name type="synonym">KIAA1461</name>
</gene>
<comment type="function">
    <text evidence="6 8 9">Non-catalytic component of the polycomb repressive deubiquitinase (PR-DUB) complex, a complex that specifically mediates deubiquitination of histone H2A monoubiquitinated at 'Lys-120' (H2AK119ub1) (PubMed:24634419). Important for stability of PR-DUB components and stimulating its ubiquitinase activity (PubMed:36180891). As part of the PR-DUB complex, associates with chromatin enriched in histone marks H3K4me1, H3K4me3, and H3K27Ac, but not in H3K27me3 (PubMed:36180891). The PR-DUB complex is an epigenetic regulator of gene expression, including genes involved in cell growth and survivability (PubMed:36180891). MBD5 and MBD6 containing complexes associate with distinct chromatin regions enriched in genes involved in different pathways (PubMed:36180891). Heterochromatin recruitment is not mediated by DNA methylation (PubMed:20700456). The PR-DUB complex is an epigenetic regulator of gene expression, including genes involved in development, cell communication, signaling, cell proliferation and cell viability (PubMed:36180891).</text>
</comment>
<comment type="subunit">
    <text evidence="8 9 14">Core component of the polycomb repressive deubiquitinase (PR-DUB) complex, at least composed of BAP1, one of ASXL1, ASXL2 or (probably) ASXL3, and one of MBD5 or MBD6 (PubMed:24634419, PubMed:36180891). Distinct combinations of ASXL and MBD proteins may preferentially bind specific histone modification marks (PubMed:36180891). The PR-DUB core associates with a number of accessory proteins, including FOXK1, FOXK2, KDM1B, HCFC1 and OGT; KDM1B specifically associates with ASXL2 PR-DUB complexes (Probable). Interacts (via MBD domain) with ASXL1, ASXL2 and ASXL3 (via PHD domain); the interaction is probably direct, mediates association with other PR-DUB complex core components (PubMed:24634419, PubMed:36180891).</text>
</comment>
<comment type="interaction">
    <interactant intactId="EBI-17671489">
        <id>Q9P267-2</id>
    </interactant>
    <interactant intactId="EBI-10962400">
        <id>Q9UHA2</id>
        <label>SS18L2</label>
    </interactant>
    <organismsDiffer>false</organismsDiffer>
    <experiments>3</experiments>
</comment>
<comment type="interaction">
    <interactant intactId="EBI-17671489">
        <id>Q9P267-2</id>
    </interactant>
    <interactant intactId="EBI-7254550">
        <id>P36508</id>
        <label>ZNF76</label>
    </interactant>
    <organismsDiffer>false</organismsDiffer>
    <experiments>3</experiments>
</comment>
<comment type="subcellular location">
    <molecule>Isoform 1</molecule>
    <subcellularLocation>
        <location evidence="6 8">Nucleus</location>
    </subcellularLocation>
    <subcellularLocation>
        <location evidence="6">Chromosome</location>
    </subcellularLocation>
    <text evidence="6 8">Associates with heterochromatin containing chromocentres in a DNA methylation-independent manner (PubMed:20700456). Does not localize to sites of DNA damage (PubMed:24634419).</text>
</comment>
<comment type="subcellular location">
    <molecule>Isoform 2</molecule>
    <subcellularLocation>
        <location evidence="6 8">Nucleus</location>
    </subcellularLocation>
    <text evidence="6 8">Does not associate with heterochromatin containing chromocentres (PubMed:20700456). Does not localize to sites of DNA damage (PubMed:24634419).</text>
</comment>
<comment type="alternative products">
    <event type="alternative splicing"/>
    <isoform>
        <id>Q9P267-1</id>
        <name evidence="12">1</name>
        <sequence type="displayed"/>
    </isoform>
    <isoform>
        <id>Q9P267-2</id>
        <name evidence="12">2</name>
        <sequence type="described" ref="VSP_011083 VSP_011084"/>
    </isoform>
    <text evidence="6">At least 2 isoforms produced by alternative splicing have been identified.</text>
</comment>
<comment type="tissue specificity">
    <text evidence="4">Detected in heart, placenta, liver, skeletal muscle, kidney and pancreas.</text>
</comment>
<comment type="domain">
    <molecule>Isoform 1</molecule>
    <text evidence="6">Possesses a methyl-binding domain (MBD) and a Pro-Trp-Trp-Pro (PWWP) domain (PubMed:20700456). Both MBD and PWWP domains are necessary for chromocentric localization (PubMed:20700456).</text>
</comment>
<comment type="domain">
    <molecule>Isoform 2</molecule>
    <text evidence="6">Possesses a methyl-binding domain (MBD) but lacks the Pro-Trp-Trp-Pro (PWWP) domain.</text>
</comment>
<comment type="domain">
    <text evidence="6">The MBD may lack methyl-binding activity.</text>
</comment>
<comment type="disease" evidence="5 7">
    <disease id="DI-00710">
        <name>Intellectual developmental disorder, autosomal dominant 1</name>
        <acronym>MRD1</acronym>
        <description>A disorder characterized by significantly below average general intellectual functioning associated with impairments in adaptive behavior and manifested during the developmental period.</description>
        <dbReference type="MIM" id="156200"/>
    </disease>
    <text>The disease is caused by variants affecting the gene represented in this entry.</text>
</comment>
<comment type="miscellaneous">
    <text evidence="13">Named 'methyl-CpG-binding domain protein' for homology to other methyl-CpG-binding domain proteins and the presence of an MBD domain, MBD5 and MBD6 may have evolutionarily lost the ability to bind methylated DNA and are recruited to heterochromatin by alternative signals.</text>
</comment>
<comment type="sequence caution" evidence="12">
    <conflict type="erroneous initiation">
        <sequence resource="EMBL-CDS" id="BAA92013"/>
    </conflict>
    <text>Truncated N-terminus.</text>
</comment>
<comment type="sequence caution" evidence="12">
    <conflict type="erroneous initiation">
        <sequence resource="EMBL-CDS" id="BAA95985"/>
    </conflict>
    <text>Extended N-terminus.</text>
</comment>
<feature type="chain" id="PRO_0000096266" description="Methyl-CpG-binding domain protein 5">
    <location>
        <begin position="1"/>
        <end position="1494"/>
    </location>
</feature>
<feature type="domain" description="MBD" evidence="2">
    <location>
        <begin position="11"/>
        <end position="81"/>
    </location>
</feature>
<feature type="domain" description="PWWP" evidence="1">
    <location>
        <begin position="1385"/>
        <end position="1409"/>
    </location>
</feature>
<feature type="region of interest" description="Required for interaction with ASXL1/2/3" evidence="9">
    <location>
        <begin position="57"/>
        <end position="68"/>
    </location>
</feature>
<feature type="region of interest" description="Disordered" evidence="3">
    <location>
        <begin position="123"/>
        <end position="152"/>
    </location>
</feature>
<feature type="region of interest" description="Disordered" evidence="3">
    <location>
        <begin position="200"/>
        <end position="274"/>
    </location>
</feature>
<feature type="region of interest" description="Disordered" evidence="3">
    <location>
        <begin position="329"/>
        <end position="350"/>
    </location>
</feature>
<feature type="region of interest" description="Disordered" evidence="3">
    <location>
        <begin position="450"/>
        <end position="522"/>
    </location>
</feature>
<feature type="region of interest" description="Disordered" evidence="3">
    <location>
        <begin position="594"/>
        <end position="641"/>
    </location>
</feature>
<feature type="region of interest" description="Disordered" evidence="3">
    <location>
        <begin position="809"/>
        <end position="848"/>
    </location>
</feature>
<feature type="region of interest" description="Disordered" evidence="3">
    <location>
        <begin position="1154"/>
        <end position="1173"/>
    </location>
</feature>
<feature type="region of interest" description="Disordered" evidence="3">
    <location>
        <begin position="1345"/>
        <end position="1375"/>
    </location>
</feature>
<feature type="region of interest" description="Disordered" evidence="3">
    <location>
        <begin position="1468"/>
        <end position="1494"/>
    </location>
</feature>
<feature type="compositionally biased region" description="Pro residues" evidence="3">
    <location>
        <begin position="333"/>
        <end position="343"/>
    </location>
</feature>
<feature type="compositionally biased region" description="Low complexity" evidence="3">
    <location>
        <begin position="499"/>
        <end position="511"/>
    </location>
</feature>
<feature type="compositionally biased region" description="Low complexity" evidence="3">
    <location>
        <begin position="594"/>
        <end position="612"/>
    </location>
</feature>
<feature type="compositionally biased region" description="Polar residues" evidence="3">
    <location>
        <begin position="614"/>
        <end position="624"/>
    </location>
</feature>
<feature type="compositionally biased region" description="Polar residues" evidence="3">
    <location>
        <begin position="813"/>
        <end position="835"/>
    </location>
</feature>
<feature type="compositionally biased region" description="Low complexity" evidence="3">
    <location>
        <begin position="836"/>
        <end position="848"/>
    </location>
</feature>
<feature type="compositionally biased region" description="Basic residues" evidence="3">
    <location>
        <begin position="1483"/>
        <end position="1494"/>
    </location>
</feature>
<feature type="splice variant" id="VSP_011083" description="In isoform 2." evidence="10 11">
    <original>GSGPSSSIAIA</original>
    <variation>MVLLEKSTQRY</variation>
    <location>
        <begin position="841"/>
        <end position="851"/>
    </location>
</feature>
<feature type="splice variant" id="VSP_011084" description="In isoform 2." evidence="10 11">
    <location>
        <begin position="852"/>
        <end position="1494"/>
    </location>
</feature>
<feature type="sequence variant" id="VAR_037561" description="In MRD1; uncertain significance; dbSNP:rs1553518402." evidence="5">
    <original>T</original>
    <variation>I</variation>
    <location>
        <position position="144"/>
    </location>
</feature>
<feature type="sequence variant" id="VAR_037562" description="In MRD1; uncertain significance; dbSNP:rs139964770." evidence="5">
    <original>R</original>
    <variation>H</variation>
    <location>
        <position position="461"/>
    </location>
</feature>
<feature type="sequence variant" id="VAR_037563" description="In MRD1; uncertain significance; dbSNP:rs139953766." evidence="5">
    <original>D</original>
    <variation>E</variation>
    <location>
        <position position="654"/>
    </location>
</feature>
<feature type="sequence variant" id="VAR_037564" description="In MRD1; uncertain significance; dbSNP:rs576930680." evidence="5">
    <original>A</original>
    <variation>T</variation>
    <location>
        <position position="655"/>
    </location>
</feature>
<feature type="sequence variant" id="VAR_037565" description="In dbSNP:rs114314967." evidence="5">
    <original>S</original>
    <variation>N</variation>
    <location>
        <position position="677"/>
    </location>
</feature>
<feature type="sequence variant" id="VAR_037566" description="In MRD1; uncertain significance; dbSNP:rs769330358." evidence="5">
    <original>A</original>
    <variation>T</variation>
    <location>
        <position position="857"/>
    </location>
</feature>
<feature type="sequence variant" id="VAR_037567" description="In MRD1; uncertain significance; dbSNP:rs145475623." evidence="5">
    <original>T</original>
    <variation>I</variation>
    <location>
        <position position="1048"/>
    </location>
</feature>
<feature type="mutagenesis site" description="Disrupts association with heterochromatin containing chromocentres." evidence="6">
    <original>P</original>
    <variation>A</variation>
    <location>
        <position position="39"/>
    </location>
</feature>
<feature type="mutagenesis site" description="Disrupts association with heterochromatin containing chromocentres." evidence="6">
    <original>WP</original>
    <variation>AA</variation>
    <location>
        <begin position="1399"/>
        <end position="1400"/>
    </location>
</feature>
<feature type="sequence conflict" description="In Ref. 2; BAA95985 and 5; AAI50265." evidence="12" ref="2 5">
    <original>R</original>
    <variation>I</variation>
    <location>
        <position position="1020"/>
    </location>
</feature>
<reference key="1">
    <citation type="journal article" date="2007" name="Am. J. Hum. Genet.">
        <title>Copy-number variations measured by single-nucleotide-polymorphism oligonucleotide arrays in patients with mental retardation.</title>
        <authorList>
            <person name="Wagenstaller J."/>
            <person name="Spranger S."/>
            <person name="Lorenz-Depiereux B."/>
            <person name="Kazmierczak B."/>
            <person name="Nathrath M."/>
            <person name="Wahl D."/>
            <person name="Heye B."/>
            <person name="Glaser D."/>
            <person name="Liebscher V."/>
            <person name="Meitinger T."/>
            <person name="Strom T.M."/>
        </authorList>
    </citation>
    <scope>NUCLEOTIDE SEQUENCE [MRNA] (ISOFORM 1)</scope>
    <scope>INVOLVEMENT IN MRD1</scope>
    <scope>VARIANTS MRD1 ILE-144; HIS-461; GLU-654; THR-655; ASN-677; THR-857 AND ILE-1048</scope>
    <source>
        <tissue>Brain</tissue>
    </source>
</reference>
<reference key="2">
    <citation type="journal article" date="2000" name="DNA Res.">
        <title>Prediction of the coding sequences of unidentified human genes. XVII. The complete sequences of 100 new cDNA clones from brain which code for large proteins in vitro.</title>
        <authorList>
            <person name="Nagase T."/>
            <person name="Kikuno R."/>
            <person name="Ishikawa K."/>
            <person name="Hirosawa M."/>
            <person name="Ohara O."/>
        </authorList>
    </citation>
    <scope>NUCLEOTIDE SEQUENCE [LARGE SCALE MRNA] (ISOFORM 1)</scope>
    <source>
        <tissue>Brain</tissue>
    </source>
</reference>
<reference key="3">
    <citation type="journal article" date="2005" name="Nature">
        <title>Generation and annotation of the DNA sequences of human chromosomes 2 and 4.</title>
        <authorList>
            <person name="Hillier L.W."/>
            <person name="Graves T.A."/>
            <person name="Fulton R.S."/>
            <person name="Fulton L.A."/>
            <person name="Pepin K.H."/>
            <person name="Minx P."/>
            <person name="Wagner-McPherson C."/>
            <person name="Layman D."/>
            <person name="Wylie K."/>
            <person name="Sekhon M."/>
            <person name="Becker M.C."/>
            <person name="Fewell G.A."/>
            <person name="Delehaunty K.D."/>
            <person name="Miner T.L."/>
            <person name="Nash W.E."/>
            <person name="Kremitzki C."/>
            <person name="Oddy L."/>
            <person name="Du H."/>
            <person name="Sun H."/>
            <person name="Bradshaw-Cordum H."/>
            <person name="Ali J."/>
            <person name="Carter J."/>
            <person name="Cordes M."/>
            <person name="Harris A."/>
            <person name="Isak A."/>
            <person name="van Brunt A."/>
            <person name="Nguyen C."/>
            <person name="Du F."/>
            <person name="Courtney L."/>
            <person name="Kalicki J."/>
            <person name="Ozersky P."/>
            <person name="Abbott S."/>
            <person name="Armstrong J."/>
            <person name="Belter E.A."/>
            <person name="Caruso L."/>
            <person name="Cedroni M."/>
            <person name="Cotton M."/>
            <person name="Davidson T."/>
            <person name="Desai A."/>
            <person name="Elliott G."/>
            <person name="Erb T."/>
            <person name="Fronick C."/>
            <person name="Gaige T."/>
            <person name="Haakenson W."/>
            <person name="Haglund K."/>
            <person name="Holmes A."/>
            <person name="Harkins R."/>
            <person name="Kim K."/>
            <person name="Kruchowski S.S."/>
            <person name="Strong C.M."/>
            <person name="Grewal N."/>
            <person name="Goyea E."/>
            <person name="Hou S."/>
            <person name="Levy A."/>
            <person name="Martinka S."/>
            <person name="Mead K."/>
            <person name="McLellan M.D."/>
            <person name="Meyer R."/>
            <person name="Randall-Maher J."/>
            <person name="Tomlinson C."/>
            <person name="Dauphin-Kohlberg S."/>
            <person name="Kozlowicz-Reilly A."/>
            <person name="Shah N."/>
            <person name="Swearengen-Shahid S."/>
            <person name="Snider J."/>
            <person name="Strong J.T."/>
            <person name="Thompson J."/>
            <person name="Yoakum M."/>
            <person name="Leonard S."/>
            <person name="Pearman C."/>
            <person name="Trani L."/>
            <person name="Radionenko M."/>
            <person name="Waligorski J.E."/>
            <person name="Wang C."/>
            <person name="Rock S.M."/>
            <person name="Tin-Wollam A.-M."/>
            <person name="Maupin R."/>
            <person name="Latreille P."/>
            <person name="Wendl M.C."/>
            <person name="Yang S.-P."/>
            <person name="Pohl C."/>
            <person name="Wallis J.W."/>
            <person name="Spieth J."/>
            <person name="Bieri T.A."/>
            <person name="Berkowicz N."/>
            <person name="Nelson J.O."/>
            <person name="Osborne J."/>
            <person name="Ding L."/>
            <person name="Meyer R."/>
            <person name="Sabo A."/>
            <person name="Shotland Y."/>
            <person name="Sinha P."/>
            <person name="Wohldmann P.E."/>
            <person name="Cook L.L."/>
            <person name="Hickenbotham M.T."/>
            <person name="Eldred J."/>
            <person name="Williams D."/>
            <person name="Jones T.A."/>
            <person name="She X."/>
            <person name="Ciccarelli F.D."/>
            <person name="Izaurralde E."/>
            <person name="Taylor J."/>
            <person name="Schmutz J."/>
            <person name="Myers R.M."/>
            <person name="Cox D.R."/>
            <person name="Huang X."/>
            <person name="McPherson J.D."/>
            <person name="Mardis E.R."/>
            <person name="Clifton S.W."/>
            <person name="Warren W.C."/>
            <person name="Chinwalla A.T."/>
            <person name="Eddy S.R."/>
            <person name="Marra M.A."/>
            <person name="Ovcharenko I."/>
            <person name="Furey T.S."/>
            <person name="Miller W."/>
            <person name="Eichler E.E."/>
            <person name="Bork P."/>
            <person name="Suyama M."/>
            <person name="Torrents D."/>
            <person name="Waterston R.H."/>
            <person name="Wilson R.K."/>
        </authorList>
    </citation>
    <scope>NUCLEOTIDE SEQUENCE [LARGE SCALE GENOMIC DNA]</scope>
</reference>
<reference key="4">
    <citation type="submission" date="2005-09" db="EMBL/GenBank/DDBJ databases">
        <authorList>
            <person name="Mural R.J."/>
            <person name="Istrail S."/>
            <person name="Sutton G.G."/>
            <person name="Florea L."/>
            <person name="Halpern A.L."/>
            <person name="Mobarry C.M."/>
            <person name="Lippert R."/>
            <person name="Walenz B."/>
            <person name="Shatkay H."/>
            <person name="Dew I."/>
            <person name="Miller J.R."/>
            <person name="Flanigan M.J."/>
            <person name="Edwards N.J."/>
            <person name="Bolanos R."/>
            <person name="Fasulo D."/>
            <person name="Halldorsson B.V."/>
            <person name="Hannenhalli S."/>
            <person name="Turner R."/>
            <person name="Yooseph S."/>
            <person name="Lu F."/>
            <person name="Nusskern D.R."/>
            <person name="Shue B.C."/>
            <person name="Zheng X.H."/>
            <person name="Zhong F."/>
            <person name="Delcher A.L."/>
            <person name="Huson D.H."/>
            <person name="Kravitz S.A."/>
            <person name="Mouchard L."/>
            <person name="Reinert K."/>
            <person name="Remington K.A."/>
            <person name="Clark A.G."/>
            <person name="Waterman M.S."/>
            <person name="Eichler E.E."/>
            <person name="Adams M.D."/>
            <person name="Hunkapiller M.W."/>
            <person name="Myers E.W."/>
            <person name="Venter J.C."/>
        </authorList>
    </citation>
    <scope>NUCLEOTIDE SEQUENCE [LARGE SCALE GENOMIC DNA]</scope>
</reference>
<reference key="5">
    <citation type="journal article" date="2004" name="Genome Res.">
        <title>The status, quality, and expansion of the NIH full-length cDNA project: the Mammalian Gene Collection (MGC).</title>
        <authorList>
            <consortium name="The MGC Project Team"/>
        </authorList>
    </citation>
    <scope>NUCLEOTIDE SEQUENCE [LARGE SCALE MRNA] (ISOFORM 1)</scope>
    <scope>NUCLEOTIDE SEQUENCE [LARGE SCALE MRNA] OF 520-1494 (ISOFORM 2)</scope>
    <source>
        <tissue>Urinary bladder</tissue>
    </source>
</reference>
<reference key="6">
    <citation type="journal article" date="2004" name="Nat. Genet.">
        <title>Complete sequencing and characterization of 21,243 full-length human cDNAs.</title>
        <authorList>
            <person name="Ota T."/>
            <person name="Suzuki Y."/>
            <person name="Nishikawa T."/>
            <person name="Otsuki T."/>
            <person name="Sugiyama T."/>
            <person name="Irie R."/>
            <person name="Wakamatsu A."/>
            <person name="Hayashi K."/>
            <person name="Sato H."/>
            <person name="Nagai K."/>
            <person name="Kimura K."/>
            <person name="Makita H."/>
            <person name="Sekine M."/>
            <person name="Obayashi M."/>
            <person name="Nishi T."/>
            <person name="Shibahara T."/>
            <person name="Tanaka T."/>
            <person name="Ishii S."/>
            <person name="Yamamoto J."/>
            <person name="Saito K."/>
            <person name="Kawai Y."/>
            <person name="Isono Y."/>
            <person name="Nakamura Y."/>
            <person name="Nagahari K."/>
            <person name="Murakami K."/>
            <person name="Yasuda T."/>
            <person name="Iwayanagi T."/>
            <person name="Wagatsuma M."/>
            <person name="Shiratori A."/>
            <person name="Sudo H."/>
            <person name="Hosoiri T."/>
            <person name="Kaku Y."/>
            <person name="Kodaira H."/>
            <person name="Kondo H."/>
            <person name="Sugawara M."/>
            <person name="Takahashi M."/>
            <person name="Kanda K."/>
            <person name="Yokoi T."/>
            <person name="Furuya T."/>
            <person name="Kikkawa E."/>
            <person name="Omura Y."/>
            <person name="Abe K."/>
            <person name="Kamihara K."/>
            <person name="Katsuta N."/>
            <person name="Sato K."/>
            <person name="Tanikawa M."/>
            <person name="Yamazaki M."/>
            <person name="Ninomiya K."/>
            <person name="Ishibashi T."/>
            <person name="Yamashita H."/>
            <person name="Murakawa K."/>
            <person name="Fujimori K."/>
            <person name="Tanai H."/>
            <person name="Kimata M."/>
            <person name="Watanabe M."/>
            <person name="Hiraoka S."/>
            <person name="Chiba Y."/>
            <person name="Ishida S."/>
            <person name="Ono Y."/>
            <person name="Takiguchi S."/>
            <person name="Watanabe S."/>
            <person name="Yosida M."/>
            <person name="Hotuta T."/>
            <person name="Kusano J."/>
            <person name="Kanehori K."/>
            <person name="Takahashi-Fujii A."/>
            <person name="Hara H."/>
            <person name="Tanase T.-O."/>
            <person name="Nomura Y."/>
            <person name="Togiya S."/>
            <person name="Komai F."/>
            <person name="Hara R."/>
            <person name="Takeuchi K."/>
            <person name="Arita M."/>
            <person name="Imose N."/>
            <person name="Musashino K."/>
            <person name="Yuuki H."/>
            <person name="Oshima A."/>
            <person name="Sasaki N."/>
            <person name="Aotsuka S."/>
            <person name="Yoshikawa Y."/>
            <person name="Matsunawa H."/>
            <person name="Ichihara T."/>
            <person name="Shiohata N."/>
            <person name="Sano S."/>
            <person name="Moriya S."/>
            <person name="Momiyama H."/>
            <person name="Satoh N."/>
            <person name="Takami S."/>
            <person name="Terashima Y."/>
            <person name="Suzuki O."/>
            <person name="Nakagawa S."/>
            <person name="Senoh A."/>
            <person name="Mizoguchi H."/>
            <person name="Goto Y."/>
            <person name="Shimizu F."/>
            <person name="Wakebe H."/>
            <person name="Hishigaki H."/>
            <person name="Watanabe T."/>
            <person name="Sugiyama A."/>
            <person name="Takemoto M."/>
            <person name="Kawakami B."/>
            <person name="Yamazaki M."/>
            <person name="Watanabe K."/>
            <person name="Kumagai A."/>
            <person name="Itakura S."/>
            <person name="Fukuzumi Y."/>
            <person name="Fujimori Y."/>
            <person name="Komiyama M."/>
            <person name="Tashiro H."/>
            <person name="Tanigami A."/>
            <person name="Fujiwara T."/>
            <person name="Ono T."/>
            <person name="Yamada K."/>
            <person name="Fujii Y."/>
            <person name="Ozaki K."/>
            <person name="Hirao M."/>
            <person name="Ohmori Y."/>
            <person name="Kawabata A."/>
            <person name="Hikiji T."/>
            <person name="Kobatake N."/>
            <person name="Inagaki H."/>
            <person name="Ikema Y."/>
            <person name="Okamoto S."/>
            <person name="Okitani R."/>
            <person name="Kawakami T."/>
            <person name="Noguchi S."/>
            <person name="Itoh T."/>
            <person name="Shigeta K."/>
            <person name="Senba T."/>
            <person name="Matsumura K."/>
            <person name="Nakajima Y."/>
            <person name="Mizuno T."/>
            <person name="Morinaga M."/>
            <person name="Sasaki M."/>
            <person name="Togashi T."/>
            <person name="Oyama M."/>
            <person name="Hata H."/>
            <person name="Watanabe M."/>
            <person name="Komatsu T."/>
            <person name="Mizushima-Sugano J."/>
            <person name="Satoh T."/>
            <person name="Shirai Y."/>
            <person name="Takahashi Y."/>
            <person name="Nakagawa K."/>
            <person name="Okumura K."/>
            <person name="Nagase T."/>
            <person name="Nomura N."/>
            <person name="Kikuchi H."/>
            <person name="Masuho Y."/>
            <person name="Yamashita R."/>
            <person name="Nakai K."/>
            <person name="Yada T."/>
            <person name="Nakamura Y."/>
            <person name="Ohara O."/>
            <person name="Isogai T."/>
            <person name="Sugano S."/>
        </authorList>
    </citation>
    <scope>NUCLEOTIDE SEQUENCE [LARGE SCALE MRNA] OF 578-1494 (ISOFORM 2)</scope>
    <source>
        <tissue>Placenta</tissue>
    </source>
</reference>
<reference key="7">
    <citation type="journal article" date="2003" name="BMC Genomics">
        <title>Comparative study of methyl-CpG-binding domain proteins.</title>
        <authorList>
            <person name="Roloff T.C."/>
            <person name="Ropers H.-H."/>
            <person name="Nuber U.A."/>
        </authorList>
    </citation>
    <scope>TISSUE SPECIFICITY</scope>
</reference>
<reference key="8">
    <citation type="journal article" date="2010" name="PLoS ONE">
        <title>The human proteins MBD5 and MBD6 associate with heterochromatin but they do not bind methylated DNA.</title>
        <authorList>
            <person name="Laget S."/>
            <person name="Joulie M."/>
            <person name="Le Masson F."/>
            <person name="Sasai N."/>
            <person name="Christians E."/>
            <person name="Pradhan S."/>
            <person name="Roberts R.J."/>
            <person name="Defossez P.A."/>
        </authorList>
    </citation>
    <scope>FUNCTION</scope>
    <scope>ALTERNATIVE SPLICING</scope>
    <scope>SUBCELLULAR LOCATION</scope>
    <scope>DOMAIN MBD AND PWWP</scope>
    <scope>MUTAGENESIS OF PRO-39 AND 1399-TRP-PRO-1400</scope>
</reference>
<reference key="9">
    <citation type="journal article" date="2014" name="Proteomics">
        <title>MBD5 and MBD6 interact with the human PR-DUB complex through their methyl-CpG-binding domain.</title>
        <authorList>
            <person name="Baymaz H.I."/>
            <person name="Fournier A."/>
            <person name="Laget S."/>
            <person name="Ji Z."/>
            <person name="Jansen P.W."/>
            <person name="Smits A.H."/>
            <person name="Ferry L."/>
            <person name="Mensinga A."/>
            <person name="Poser I."/>
            <person name="Sharrocks A."/>
            <person name="Defossez P.A."/>
            <person name="Vermeulen M."/>
        </authorList>
    </citation>
    <scope>FUNCTION</scope>
    <scope>IDENTIFICATION IN THE PR-DUB COMPLEX</scope>
    <scope>SUBCELLULAR LOCATION</scope>
    <scope>IDENTIFICATION BY MASS SPECTROMETRY</scope>
</reference>
<reference key="10">
    <citation type="journal article" date="2022" name="Genome Biol.">
        <title>MBD5 and MBD6 stabilize the BAP1 complex and promote BAP1-dependent cancer.</title>
        <authorList>
            <person name="Tsuboyama N."/>
            <person name="Szczepanski A.P."/>
            <person name="Zhao Z."/>
            <person name="Wang L."/>
        </authorList>
    </citation>
    <scope>FUNCTION</scope>
    <scope>IDENTIFICATION IN THE PR-DUB COMPLEX</scope>
    <scope>INTERACTION WITH ASXL1; ASXL2 AND ASXL3</scope>
    <scope>IDENTIFICATION BY MASS SPECTROMETRY</scope>
</reference>
<reference key="11">
    <citation type="journal article" date="2012" name="Am. J. Hum. Genet.">
        <title>Disruption of an EHMT1-associated chromatin-modification module causes intellectual disability.</title>
        <authorList>
            <person name="Kleefstra T."/>
            <person name="Kramer J.M."/>
            <person name="Neveling K."/>
            <person name="Willemsen M.H."/>
            <person name="Koemans T.S."/>
            <person name="Vissers L.E."/>
            <person name="Wissink-Lindhout W."/>
            <person name="Fenckova M."/>
            <person name="van den Akker W.M."/>
            <person name="Kasri N.N."/>
            <person name="Nillesen W.M."/>
            <person name="Prescott T."/>
            <person name="Clark R.D."/>
            <person name="Devriendt K."/>
            <person name="van Reeuwijk J."/>
            <person name="de Brouwer A.P."/>
            <person name="Gilissen C."/>
            <person name="Zhou H."/>
            <person name="Brunner H.G."/>
            <person name="Veltman J.A."/>
            <person name="Schenck A."/>
            <person name="van Bokhoven H."/>
        </authorList>
    </citation>
    <scope>INVOLVEMENT IN MRD1</scope>
</reference>
<dbReference type="EMBL" id="EF542797">
    <property type="protein sequence ID" value="ABQ18300.1"/>
    <property type="molecule type" value="mRNA"/>
</dbReference>
<dbReference type="EMBL" id="AB040894">
    <property type="protein sequence ID" value="BAA95985.1"/>
    <property type="status" value="ALT_INIT"/>
    <property type="molecule type" value="mRNA"/>
</dbReference>
<dbReference type="EMBL" id="AC016731">
    <property type="protein sequence ID" value="AAY14912.1"/>
    <property type="molecule type" value="Genomic_DNA"/>
</dbReference>
<dbReference type="EMBL" id="CH471058">
    <property type="protein sequence ID" value="EAX11552.1"/>
    <property type="molecule type" value="Genomic_DNA"/>
</dbReference>
<dbReference type="EMBL" id="BC014534">
    <property type="status" value="NOT_ANNOTATED_CDS"/>
    <property type="molecule type" value="mRNA"/>
</dbReference>
<dbReference type="EMBL" id="BC150264">
    <property type="protein sequence ID" value="AAI50265.1"/>
    <property type="molecule type" value="mRNA"/>
</dbReference>
<dbReference type="EMBL" id="AK001975">
    <property type="protein sequence ID" value="BAA92013.1"/>
    <property type="status" value="ALT_INIT"/>
    <property type="molecule type" value="mRNA"/>
</dbReference>
<dbReference type="CCDS" id="CCDS33302.1">
    <molecule id="Q9P267-1"/>
</dbReference>
<dbReference type="RefSeq" id="NP_060798.2">
    <molecule id="Q9P267-1"/>
    <property type="nucleotide sequence ID" value="NM_018328.4"/>
</dbReference>
<dbReference type="RefSeq" id="XP_047301045.1">
    <molecule id="Q9P267-1"/>
    <property type="nucleotide sequence ID" value="XM_047445089.1"/>
</dbReference>
<dbReference type="RefSeq" id="XP_047301046.1">
    <molecule id="Q9P267-1"/>
    <property type="nucleotide sequence ID" value="XM_047445090.1"/>
</dbReference>
<dbReference type="RefSeq" id="XP_047301047.1">
    <molecule id="Q9P267-1"/>
    <property type="nucleotide sequence ID" value="XM_047445091.1"/>
</dbReference>
<dbReference type="RefSeq" id="XP_047301048.1">
    <molecule id="Q9P267-1"/>
    <property type="nucleotide sequence ID" value="XM_047445092.1"/>
</dbReference>
<dbReference type="RefSeq" id="XP_047301049.1">
    <molecule id="Q9P267-1"/>
    <property type="nucleotide sequence ID" value="XM_047445093.1"/>
</dbReference>
<dbReference type="RefSeq" id="XP_054198942.1">
    <molecule id="Q9P267-1"/>
    <property type="nucleotide sequence ID" value="XM_054342967.1"/>
</dbReference>
<dbReference type="RefSeq" id="XP_054198943.1">
    <molecule id="Q9P267-1"/>
    <property type="nucleotide sequence ID" value="XM_054342968.1"/>
</dbReference>
<dbReference type="RefSeq" id="XP_054198944.1">
    <molecule id="Q9P267-1"/>
    <property type="nucleotide sequence ID" value="XM_054342969.1"/>
</dbReference>
<dbReference type="RefSeq" id="XP_054198945.1">
    <molecule id="Q9P267-1"/>
    <property type="nucleotide sequence ID" value="XM_054342970.1"/>
</dbReference>
<dbReference type="RefSeq" id="XP_054198946.1">
    <molecule id="Q9P267-1"/>
    <property type="nucleotide sequence ID" value="XM_054342971.1"/>
</dbReference>
<dbReference type="BioGRID" id="120892">
    <property type="interactions" value="86"/>
</dbReference>
<dbReference type="FunCoup" id="Q9P267">
    <property type="interactions" value="2357"/>
</dbReference>
<dbReference type="IntAct" id="Q9P267">
    <property type="interactions" value="33"/>
</dbReference>
<dbReference type="STRING" id="9606.ENSP00000386049"/>
<dbReference type="GlyGen" id="Q9P267">
    <property type="glycosylation" value="2 sites, 1 O-linked glycan (1 site)"/>
</dbReference>
<dbReference type="iPTMnet" id="Q9P267"/>
<dbReference type="PhosphoSitePlus" id="Q9P267"/>
<dbReference type="BioMuta" id="MBD5"/>
<dbReference type="DMDM" id="296439306"/>
<dbReference type="jPOST" id="Q9P267"/>
<dbReference type="MassIVE" id="Q9P267"/>
<dbReference type="PaxDb" id="9606-ENSP00000386049"/>
<dbReference type="PeptideAtlas" id="Q9P267"/>
<dbReference type="ProteomicsDB" id="83738">
    <molecule id="Q9P267-1"/>
</dbReference>
<dbReference type="ProteomicsDB" id="83739">
    <molecule id="Q9P267-2"/>
</dbReference>
<dbReference type="Antibodypedia" id="33627">
    <property type="antibodies" value="112 antibodies from 18 providers"/>
</dbReference>
<dbReference type="DNASU" id="55777"/>
<dbReference type="Ensembl" id="ENST00000407073.5">
    <molecule id="Q9P267-1"/>
    <property type="protein sequence ID" value="ENSP00000386049.1"/>
    <property type="gene ID" value="ENSG00000204406.14"/>
</dbReference>
<dbReference type="Ensembl" id="ENST00000627651.2">
    <molecule id="Q9P267-2"/>
    <property type="protein sequence ID" value="ENSP00000486370.1"/>
    <property type="gene ID" value="ENSG00000204406.14"/>
</dbReference>
<dbReference type="GeneID" id="55777"/>
<dbReference type="KEGG" id="hsa:55777"/>
<dbReference type="UCSC" id="uc002twm.5">
    <molecule id="Q9P267-1"/>
    <property type="organism name" value="human"/>
</dbReference>
<dbReference type="AGR" id="HGNC:20444"/>
<dbReference type="CTD" id="55777"/>
<dbReference type="DisGeNET" id="55777"/>
<dbReference type="GeneCards" id="MBD5"/>
<dbReference type="GeneReviews" id="MBD5"/>
<dbReference type="HGNC" id="HGNC:20444">
    <property type="gene designation" value="MBD5"/>
</dbReference>
<dbReference type="HPA" id="ENSG00000204406">
    <property type="expression patterns" value="Low tissue specificity"/>
</dbReference>
<dbReference type="MalaCards" id="MBD5"/>
<dbReference type="MIM" id="156200">
    <property type="type" value="phenotype"/>
</dbReference>
<dbReference type="MIM" id="611472">
    <property type="type" value="gene"/>
</dbReference>
<dbReference type="neXtProt" id="NX_Q9P267"/>
<dbReference type="OpenTargets" id="ENSG00000204406"/>
<dbReference type="Orphanet" id="228402">
    <property type="disease" value="2q23.1 microdeletion syndrome"/>
</dbReference>
<dbReference type="Orphanet" id="178469">
    <property type="disease" value="Autosomal dominant non-syndromic intellectual disability"/>
</dbReference>
<dbReference type="PharmGKB" id="PA134924244"/>
<dbReference type="VEuPathDB" id="HostDB:ENSG00000204406"/>
<dbReference type="eggNOG" id="ENOG502QTC7">
    <property type="taxonomic scope" value="Eukaryota"/>
</dbReference>
<dbReference type="GeneTree" id="ENSGT00530000064137"/>
<dbReference type="HOGENOM" id="CLU_003105_0_0_1"/>
<dbReference type="InParanoid" id="Q9P267"/>
<dbReference type="OrthoDB" id="641149at2759"/>
<dbReference type="PAN-GO" id="Q9P267">
    <property type="GO annotations" value="3 GO annotations based on evolutionary models"/>
</dbReference>
<dbReference type="PhylomeDB" id="Q9P267"/>
<dbReference type="TreeFam" id="TF106391"/>
<dbReference type="PathwayCommons" id="Q9P267"/>
<dbReference type="Reactome" id="R-HSA-5689603">
    <property type="pathway name" value="UCH proteinases"/>
</dbReference>
<dbReference type="SignaLink" id="Q9P267"/>
<dbReference type="SIGNOR" id="Q9P267"/>
<dbReference type="BioGRID-ORCS" id="55777">
    <property type="hits" value="7 hits in 1148 CRISPR screens"/>
</dbReference>
<dbReference type="ChiTaRS" id="MBD5">
    <property type="organism name" value="human"/>
</dbReference>
<dbReference type="GenomeRNAi" id="55777"/>
<dbReference type="Pharos" id="Q9P267">
    <property type="development level" value="Tbio"/>
</dbReference>
<dbReference type="PRO" id="PR:Q9P267"/>
<dbReference type="Proteomes" id="UP000005640">
    <property type="component" value="Chromosome 2"/>
</dbReference>
<dbReference type="RNAct" id="Q9P267">
    <property type="molecule type" value="protein"/>
</dbReference>
<dbReference type="Bgee" id="ENSG00000204406">
    <property type="expression patterns" value="Expressed in calcaneal tendon and 166 other cell types or tissues"/>
</dbReference>
<dbReference type="ExpressionAtlas" id="Q9P267">
    <property type="expression patterns" value="baseline and differential"/>
</dbReference>
<dbReference type="GO" id="GO:0010369">
    <property type="term" value="C:chromocenter"/>
    <property type="evidence" value="ECO:0000314"/>
    <property type="project" value="UniProtKB"/>
</dbReference>
<dbReference type="GO" id="GO:0005694">
    <property type="term" value="C:chromosome"/>
    <property type="evidence" value="ECO:0007669"/>
    <property type="project" value="UniProtKB-SubCell"/>
</dbReference>
<dbReference type="GO" id="GO:0070062">
    <property type="term" value="C:extracellular exosome"/>
    <property type="evidence" value="ECO:0007005"/>
    <property type="project" value="UniProtKB"/>
</dbReference>
<dbReference type="GO" id="GO:0030496">
    <property type="term" value="C:midbody"/>
    <property type="evidence" value="ECO:0000314"/>
    <property type="project" value="HPA"/>
</dbReference>
<dbReference type="GO" id="GO:0005654">
    <property type="term" value="C:nucleoplasm"/>
    <property type="evidence" value="ECO:0000314"/>
    <property type="project" value="HPA"/>
</dbReference>
<dbReference type="GO" id="GO:0005634">
    <property type="term" value="C:nucleus"/>
    <property type="evidence" value="ECO:0000314"/>
    <property type="project" value="UniProtKB"/>
</dbReference>
<dbReference type="GO" id="GO:0003682">
    <property type="term" value="F:chromatin binding"/>
    <property type="evidence" value="ECO:0000314"/>
    <property type="project" value="UniProtKB"/>
</dbReference>
<dbReference type="GO" id="GO:0042593">
    <property type="term" value="P:glucose homeostasis"/>
    <property type="evidence" value="ECO:0000250"/>
    <property type="project" value="UniProtKB"/>
</dbReference>
<dbReference type="GO" id="GO:0007399">
    <property type="term" value="P:nervous system development"/>
    <property type="evidence" value="ECO:0000315"/>
    <property type="project" value="UniProtKB"/>
</dbReference>
<dbReference type="GO" id="GO:0060399">
    <property type="term" value="P:positive regulation of growth hormone receptor signaling pathway"/>
    <property type="evidence" value="ECO:0000250"/>
    <property type="project" value="UniProtKB"/>
</dbReference>
<dbReference type="GO" id="GO:0050795">
    <property type="term" value="P:regulation of behavior"/>
    <property type="evidence" value="ECO:0000315"/>
    <property type="project" value="UniProtKB"/>
</dbReference>
<dbReference type="GO" id="GO:0040014">
    <property type="term" value="P:regulation of multicellular organism growth"/>
    <property type="evidence" value="ECO:0000250"/>
    <property type="project" value="UniProtKB"/>
</dbReference>
<dbReference type="CDD" id="cd20141">
    <property type="entry name" value="PWWP_MBD5"/>
    <property type="match status" value="1"/>
</dbReference>
<dbReference type="FunFam" id="2.30.30.140:FF:000035">
    <property type="entry name" value="Methyl-CpG binding domain protein 5"/>
    <property type="match status" value="1"/>
</dbReference>
<dbReference type="Gene3D" id="2.30.30.140">
    <property type="match status" value="1"/>
</dbReference>
<dbReference type="InterPro" id="IPR016177">
    <property type="entry name" value="DNA-bd_dom_sf"/>
</dbReference>
<dbReference type="InterPro" id="IPR001739">
    <property type="entry name" value="Methyl_CpG_DNA-bd"/>
</dbReference>
<dbReference type="InterPro" id="IPR000313">
    <property type="entry name" value="PWWP_dom"/>
</dbReference>
<dbReference type="PANTHER" id="PTHR16112">
    <property type="entry name" value="METHYL-CPG BINDING PROTEIN, DROSOPHILA"/>
    <property type="match status" value="1"/>
</dbReference>
<dbReference type="PANTHER" id="PTHR16112:SF18">
    <property type="entry name" value="METHYL-CPG-BINDING DOMAIN PROTEIN 5"/>
    <property type="match status" value="1"/>
</dbReference>
<dbReference type="SMART" id="SM00391">
    <property type="entry name" value="MBD"/>
    <property type="match status" value="1"/>
</dbReference>
<dbReference type="SUPFAM" id="SSF54171">
    <property type="entry name" value="DNA-binding domain"/>
    <property type="match status" value="1"/>
</dbReference>
<dbReference type="SUPFAM" id="SSF63748">
    <property type="entry name" value="Tudor/PWWP/MBT"/>
    <property type="match status" value="1"/>
</dbReference>
<dbReference type="PROSITE" id="PS50982">
    <property type="entry name" value="MBD"/>
    <property type="match status" value="1"/>
</dbReference>
<dbReference type="PROSITE" id="PS50812">
    <property type="entry name" value="PWWP"/>
    <property type="match status" value="1"/>
</dbReference>
<organism>
    <name type="scientific">Homo sapiens</name>
    <name type="common">Human</name>
    <dbReference type="NCBI Taxonomy" id="9606"/>
    <lineage>
        <taxon>Eukaryota</taxon>
        <taxon>Metazoa</taxon>
        <taxon>Chordata</taxon>
        <taxon>Craniata</taxon>
        <taxon>Vertebrata</taxon>
        <taxon>Euteleostomi</taxon>
        <taxon>Mammalia</taxon>
        <taxon>Eutheria</taxon>
        <taxon>Euarchontoglires</taxon>
        <taxon>Primates</taxon>
        <taxon>Haplorrhini</taxon>
        <taxon>Catarrhini</taxon>
        <taxon>Hominidae</taxon>
        <taxon>Homo</taxon>
    </lineage>
</organism>
<sequence length="1494" mass="159895">MNGGKECDGGDKEGGLPAIQVPVGWQRRVDQNGVLYVSPSGSLLSCLEQVKTYLLTDGTCKCGLECPLILPKVFNFDPGAAVKQRTAEDVKADEDVTKLCIHKRKIIAVATLHKSMEAPHPSLVLTSPGGGTNATPVVPSRAATPRSVRNKSHEGITNSVMPECKNPFKLMIGSSNAMGRLYVQELPGSQQQELHPVYPRQRLGSSEHGQKSPFRGSHGGLPSPASSGSQIYGDGSISPRTDPLGSPDVFTRSNPGFHGAPNSSPIHLNRTPLSPPSVMLHGSPVQSSCAMAGRTNIPLSPTLTTKSPVMKKPMCNFSTNMEIPRAMFHHKPPQGPPPPPPPSCALQKKPLTSEKDPLGILDPIPSKPVNQNPVIINPTSFHSNVHSQVPMMNVSMPPAVVPLPSNLPLPTVKPGHMNHGSHVQRVQHSASTSLSPSPVTSPVHMMGTGIGRIEASPQRSRSSSTSSDHGNFMMPPVGPQATSSGIKVPPRSPRSTIGSPRPSMPSSPSTKSDGHHQYKDIPNPLIAGISNVLNTPSSAAFPTASAGSSSVKSQPGLLGMPLNQILNQHNAASFPASSLLSAAAKAQLANQNKLAGNNSSSSSNSGAVAGSGNTEGHSTLNTMFPPTANMLLPTGEGQSGRAALRDKLMSQQKDALRKRKQPPTTVLSLLRQSQMDSSAVPKPGPDLLRKQGQGSFPISSMSQLLQSMSCQSSHLSSNSTPGCGASNTALPCSANQLHFTDPSMNSSVLQNIPLRGEAVHCHNANTNFVHSNSPVPNHHLAGLINQIQASGNCGMLSQSGMALGNSLHPNPPQSRISTSSTPVIPNSIVSSYNQTSSEAGGSGPSSSIAIAGTNHPAITKTTSVLQDGVIVTTAAGNPLQSQLPIGSDFPFVGQEHALHFPSNSTSNNHLPHPLNPSLLSSLPISLPVNQQHLLNQNLLNILQPSAGEGDMSSINNTLSNHQLTHLQSLLNNNQMFPPNQQQQQLLQGYQNLQAFQGQSTIPCPANNNPMACLFQNFQVRMQEDAALLNKRISTQPGLTALPENPNTTLPPFQDTPCELQPRIDPSLGQQVKDGLVVGGPGDASVDAIYKAVVDAASKGMQVVITTAVNSTTQISPIPALSAMSAFTASIGDPLNLSSAVSAVIHGRNMGGVDHDGRLRNSRGARLPKNLDHGKNVNEGDGFEYFKSASCHTSKKQWDGEQSPRGERNRWKYEEFLDHPGHIHSSPCHERPNNVSTLPFLPGEQHPILLPPRNCPGDKILEENFRYNNYKRTMMSFKERLENTVERCAHINGNRPRQSRGFGELLSTAKQDLVLEEQSPSSSNSLENSLVKDYIHYNGDFNAKSVNGCVPSPSDAKSISSEDDLRNPDSPSSNELIHYRPRTFNVGDLVWGQIKGLTSWPGKLVREDDVHNSCQQSPEEGKVEPEKLKTLTEGLEAYSRVRKRNRKSGKLNNHLEAAIHEAMSELDKMSGTVHQIPQGDRQMRPPKPKRRKISR</sequence>
<protein>
    <recommendedName>
        <fullName>Methyl-CpG-binding domain protein 5</fullName>
    </recommendedName>
    <alternativeName>
        <fullName>Methyl-CpG-binding protein MBD5</fullName>
    </alternativeName>
</protein>
<keyword id="KW-0025">Alternative splicing</keyword>
<keyword id="KW-0158">Chromosome</keyword>
<keyword id="KW-0991">Intellectual disability</keyword>
<keyword id="KW-0539">Nucleus</keyword>
<keyword id="KW-1267">Proteomics identification</keyword>
<keyword id="KW-1185">Reference proteome</keyword>
<keyword id="KW-0833">Ubl conjugation pathway</keyword>
<accession>Q9P267</accession>
<accession>A5HMQ4</accession>
<accession>A7E2B1</accession>
<accession>Q53SR1</accession>
<accession>Q9NUV6</accession>
<proteinExistence type="evidence at protein level"/>
<name>MBD5_HUMAN</name>